<evidence type="ECO:0000303" key="1">
    <source>
    </source>
</evidence>
<evidence type="ECO:0000305" key="2"/>
<proteinExistence type="inferred from homology"/>
<gene>
    <name type="primary">rpl33</name>
    <name type="ordered locus">AtCg00640</name>
</gene>
<name>RK33_ARATH</name>
<reference key="1">
    <citation type="journal article" date="1999" name="DNA Res.">
        <title>Complete structure of the chloroplast genome of Arabidopsis thaliana.</title>
        <authorList>
            <person name="Sato S."/>
            <person name="Nakamura Y."/>
            <person name="Kaneko T."/>
            <person name="Asamizu E."/>
            <person name="Tabata S."/>
        </authorList>
    </citation>
    <scope>NUCLEOTIDE SEQUENCE [LARGE SCALE GENOMIC DNA]</scope>
    <source>
        <strain>cv. Columbia</strain>
    </source>
</reference>
<reference key="2">
    <citation type="journal article" date="2023" name="Plant Cell">
        <title>An updated nomenclature for plant ribosomal protein genes.</title>
        <authorList>
            <person name="Scarpin M.R."/>
            <person name="Busche M."/>
            <person name="Martinez R.E."/>
            <person name="Harper L.C."/>
            <person name="Reiser L."/>
            <person name="Szakonyi D."/>
            <person name="Merchante C."/>
            <person name="Lan T."/>
            <person name="Xiong W."/>
            <person name="Mo B."/>
            <person name="Tang G."/>
            <person name="Chen X."/>
            <person name="Bailey-Serres J."/>
            <person name="Browning K.S."/>
            <person name="Brunkard J.O."/>
        </authorList>
    </citation>
    <scope>NOMENCLATURE</scope>
</reference>
<accession>P56796</accession>
<feature type="chain" id="PRO_0000170275" description="Large ribosomal subunit protein bL33c">
    <location>
        <begin position="1"/>
        <end position="66"/>
    </location>
</feature>
<keyword id="KW-0150">Chloroplast</keyword>
<keyword id="KW-0934">Plastid</keyword>
<keyword id="KW-1185">Reference proteome</keyword>
<keyword id="KW-0687">Ribonucleoprotein</keyword>
<keyword id="KW-0689">Ribosomal protein</keyword>
<geneLocation type="chloroplast"/>
<sequence length="66" mass="7692">MAKGKDVRVTIILECTSCVRNDIKKEAAGISRYITQKNRHNTPSRLELRKFCPYCYKHTIHGEIKK</sequence>
<organism>
    <name type="scientific">Arabidopsis thaliana</name>
    <name type="common">Mouse-ear cress</name>
    <dbReference type="NCBI Taxonomy" id="3702"/>
    <lineage>
        <taxon>Eukaryota</taxon>
        <taxon>Viridiplantae</taxon>
        <taxon>Streptophyta</taxon>
        <taxon>Embryophyta</taxon>
        <taxon>Tracheophyta</taxon>
        <taxon>Spermatophyta</taxon>
        <taxon>Magnoliopsida</taxon>
        <taxon>eudicotyledons</taxon>
        <taxon>Gunneridae</taxon>
        <taxon>Pentapetalae</taxon>
        <taxon>rosids</taxon>
        <taxon>malvids</taxon>
        <taxon>Brassicales</taxon>
        <taxon>Brassicaceae</taxon>
        <taxon>Camelineae</taxon>
        <taxon>Arabidopsis</taxon>
    </lineage>
</organism>
<protein>
    <recommendedName>
        <fullName evidence="1">Large ribosomal subunit protein bL33c</fullName>
    </recommendedName>
    <alternativeName>
        <fullName>50S ribosomal protein L33, chloroplastic</fullName>
    </alternativeName>
</protein>
<dbReference type="EMBL" id="AP000423">
    <property type="protein sequence ID" value="BAA84406.1"/>
    <property type="molecule type" value="Genomic_DNA"/>
</dbReference>
<dbReference type="RefSeq" id="NP_051080.1">
    <property type="nucleotide sequence ID" value="NC_000932.1"/>
</dbReference>
<dbReference type="FunCoup" id="P56796">
    <property type="interactions" value="35"/>
</dbReference>
<dbReference type="STRING" id="3702.P56796"/>
<dbReference type="PaxDb" id="3702-ATCG00640.1"/>
<dbReference type="ProteomicsDB" id="226469"/>
<dbReference type="EnsemblPlants" id="ATCG00640.1">
    <property type="protein sequence ID" value="ATCG00640.1"/>
    <property type="gene ID" value="ATCG00640"/>
</dbReference>
<dbReference type="GeneID" id="844737"/>
<dbReference type="Gramene" id="ATCG00640.1">
    <property type="protein sequence ID" value="ATCG00640.1"/>
    <property type="gene ID" value="ATCG00640"/>
</dbReference>
<dbReference type="KEGG" id="ath:ArthCp043"/>
<dbReference type="Araport" id="ATCG00640"/>
<dbReference type="TAIR" id="ATCG00640">
    <property type="gene designation" value="RPL33"/>
</dbReference>
<dbReference type="eggNOG" id="ENOG502S7HT">
    <property type="taxonomic scope" value="Eukaryota"/>
</dbReference>
<dbReference type="HOGENOM" id="CLU_190949_3_0_1"/>
<dbReference type="InParanoid" id="P56796"/>
<dbReference type="OMA" id="ECTEHKA"/>
<dbReference type="PRO" id="PR:P56796"/>
<dbReference type="Proteomes" id="UP000006548">
    <property type="component" value="Chloroplast Pltd"/>
</dbReference>
<dbReference type="ExpressionAtlas" id="P56796">
    <property type="expression patterns" value="baseline and differential"/>
</dbReference>
<dbReference type="GO" id="GO:0009507">
    <property type="term" value="C:chloroplast"/>
    <property type="evidence" value="ECO:0007005"/>
    <property type="project" value="TAIR"/>
</dbReference>
<dbReference type="GO" id="GO:0009536">
    <property type="term" value="C:plastid"/>
    <property type="evidence" value="ECO:0007005"/>
    <property type="project" value="TAIR"/>
</dbReference>
<dbReference type="GO" id="GO:1990904">
    <property type="term" value="C:ribonucleoprotein complex"/>
    <property type="evidence" value="ECO:0007669"/>
    <property type="project" value="UniProtKB-KW"/>
</dbReference>
<dbReference type="GO" id="GO:0005840">
    <property type="term" value="C:ribosome"/>
    <property type="evidence" value="ECO:0007669"/>
    <property type="project" value="UniProtKB-KW"/>
</dbReference>
<dbReference type="GO" id="GO:0003735">
    <property type="term" value="F:structural constituent of ribosome"/>
    <property type="evidence" value="ECO:0007669"/>
    <property type="project" value="InterPro"/>
</dbReference>
<dbReference type="GO" id="GO:0006412">
    <property type="term" value="P:translation"/>
    <property type="evidence" value="ECO:0007669"/>
    <property type="project" value="UniProtKB-UniRule"/>
</dbReference>
<dbReference type="FunFam" id="2.20.28.120:FF:000004">
    <property type="entry name" value="50S ribosomal protein L33, chloroplastic"/>
    <property type="match status" value="1"/>
</dbReference>
<dbReference type="Gene3D" id="2.20.28.120">
    <property type="entry name" value="Ribosomal protein L33"/>
    <property type="match status" value="1"/>
</dbReference>
<dbReference type="HAMAP" id="MF_00294">
    <property type="entry name" value="Ribosomal_bL33"/>
    <property type="match status" value="1"/>
</dbReference>
<dbReference type="InterPro" id="IPR001705">
    <property type="entry name" value="Ribosomal_bL33"/>
</dbReference>
<dbReference type="InterPro" id="IPR018264">
    <property type="entry name" value="Ribosomal_bL33_CS"/>
</dbReference>
<dbReference type="InterPro" id="IPR038584">
    <property type="entry name" value="Ribosomal_bL33_sf"/>
</dbReference>
<dbReference type="InterPro" id="IPR011332">
    <property type="entry name" value="Ribosomal_zn-bd"/>
</dbReference>
<dbReference type="NCBIfam" id="NF001764">
    <property type="entry name" value="PRK00504.1"/>
    <property type="match status" value="1"/>
</dbReference>
<dbReference type="NCBIfam" id="NF001860">
    <property type="entry name" value="PRK00595.1"/>
    <property type="match status" value="1"/>
</dbReference>
<dbReference type="NCBIfam" id="TIGR01023">
    <property type="entry name" value="rpmG_bact"/>
    <property type="match status" value="1"/>
</dbReference>
<dbReference type="PANTHER" id="PTHR43168">
    <property type="entry name" value="50S RIBOSOMAL PROTEIN L33, CHLOROPLASTIC"/>
    <property type="match status" value="1"/>
</dbReference>
<dbReference type="PANTHER" id="PTHR43168:SF2">
    <property type="entry name" value="LARGE RIBOSOMAL SUBUNIT PROTEIN BL33C"/>
    <property type="match status" value="1"/>
</dbReference>
<dbReference type="Pfam" id="PF00471">
    <property type="entry name" value="Ribosomal_L33"/>
    <property type="match status" value="1"/>
</dbReference>
<dbReference type="SUPFAM" id="SSF57829">
    <property type="entry name" value="Zn-binding ribosomal proteins"/>
    <property type="match status" value="1"/>
</dbReference>
<dbReference type="PROSITE" id="PS00582">
    <property type="entry name" value="RIBOSOMAL_L33"/>
    <property type="match status" value="1"/>
</dbReference>
<comment type="subcellular location">
    <subcellularLocation>
        <location>Plastid</location>
        <location>Chloroplast</location>
    </subcellularLocation>
</comment>
<comment type="similarity">
    <text evidence="2">Belongs to the bacterial ribosomal protein bL33 family.</text>
</comment>